<feature type="transit peptide" description="Mitochondrion" evidence="1">
    <location>
        <begin position="1"/>
        <end position="25"/>
    </location>
</feature>
<feature type="chain" id="PRO_0000363415" description="Pentatricopeptide repeat-containing protein At4g01030, mitochondrial">
    <location>
        <begin position="26"/>
        <end position="768"/>
    </location>
</feature>
<feature type="repeat" description="PPR 1">
    <location>
        <begin position="22"/>
        <end position="52"/>
    </location>
</feature>
<feature type="repeat" description="PPR 2">
    <location>
        <begin position="53"/>
        <end position="87"/>
    </location>
</feature>
<feature type="repeat" description="PPR 3">
    <location>
        <begin position="88"/>
        <end position="122"/>
    </location>
</feature>
<feature type="repeat" description="PPR 4">
    <location>
        <begin position="123"/>
        <end position="153"/>
    </location>
</feature>
<feature type="repeat" description="PPR 5">
    <location>
        <begin position="154"/>
        <end position="188"/>
    </location>
</feature>
<feature type="repeat" description="PPR 6">
    <location>
        <begin position="189"/>
        <end position="223"/>
    </location>
</feature>
<feature type="repeat" description="PPR 7">
    <location>
        <begin position="224"/>
        <end position="254"/>
    </location>
</feature>
<feature type="repeat" description="PPR 8">
    <location>
        <begin position="259"/>
        <end position="289"/>
    </location>
</feature>
<feature type="repeat" description="PPR 9">
    <location>
        <begin position="290"/>
        <end position="324"/>
    </location>
</feature>
<feature type="repeat" description="PPR 10">
    <location>
        <begin position="325"/>
        <end position="359"/>
    </location>
</feature>
<feature type="repeat" description="PPR 11">
    <location>
        <begin position="360"/>
        <end position="394"/>
    </location>
</feature>
<feature type="repeat" description="PPR 12">
    <location>
        <begin position="395"/>
        <end position="429"/>
    </location>
</feature>
<feature type="repeat" description="PPR 13">
    <location>
        <begin position="430"/>
        <end position="460"/>
    </location>
</feature>
<feature type="repeat" description="PPR 14">
    <location>
        <begin position="461"/>
        <end position="495"/>
    </location>
</feature>
<feature type="repeat" description="PPR 15">
    <location>
        <begin position="496"/>
        <end position="526"/>
    </location>
</feature>
<feature type="repeat" description="PPR 16">
    <location>
        <begin position="532"/>
        <end position="562"/>
    </location>
</feature>
<feature type="region of interest" description="Type E motif">
    <location>
        <begin position="567"/>
        <end position="642"/>
    </location>
</feature>
<feature type="region of interest" description="Type E(+) motif">
    <location>
        <begin position="643"/>
        <end position="673"/>
    </location>
</feature>
<feature type="region of interest" description="Type DYW motif">
    <location>
        <begin position="674"/>
        <end position="768"/>
    </location>
</feature>
<name>PP297_ARATH</name>
<accession>Q9SV26</accession>
<reference key="1">
    <citation type="journal article" date="1999" name="Nature">
        <title>Sequence and analysis of chromosome 4 of the plant Arabidopsis thaliana.</title>
        <authorList>
            <person name="Mayer K.F.X."/>
            <person name="Schueller C."/>
            <person name="Wambutt R."/>
            <person name="Murphy G."/>
            <person name="Volckaert G."/>
            <person name="Pohl T."/>
            <person name="Duesterhoeft A."/>
            <person name="Stiekema W."/>
            <person name="Entian K.-D."/>
            <person name="Terryn N."/>
            <person name="Harris B."/>
            <person name="Ansorge W."/>
            <person name="Brandt P."/>
            <person name="Grivell L.A."/>
            <person name="Rieger M."/>
            <person name="Weichselgartner M."/>
            <person name="de Simone V."/>
            <person name="Obermaier B."/>
            <person name="Mache R."/>
            <person name="Mueller M."/>
            <person name="Kreis M."/>
            <person name="Delseny M."/>
            <person name="Puigdomenech P."/>
            <person name="Watson M."/>
            <person name="Schmidtheini T."/>
            <person name="Reichert B."/>
            <person name="Portetelle D."/>
            <person name="Perez-Alonso M."/>
            <person name="Boutry M."/>
            <person name="Bancroft I."/>
            <person name="Vos P."/>
            <person name="Hoheisel J."/>
            <person name="Zimmermann W."/>
            <person name="Wedler H."/>
            <person name="Ridley P."/>
            <person name="Langham S.-A."/>
            <person name="McCullagh B."/>
            <person name="Bilham L."/>
            <person name="Robben J."/>
            <person name="van der Schueren J."/>
            <person name="Grymonprez B."/>
            <person name="Chuang Y.-J."/>
            <person name="Vandenbussche F."/>
            <person name="Braeken M."/>
            <person name="Weltjens I."/>
            <person name="Voet M."/>
            <person name="Bastiaens I."/>
            <person name="Aert R."/>
            <person name="Defoor E."/>
            <person name="Weitzenegger T."/>
            <person name="Bothe G."/>
            <person name="Ramsperger U."/>
            <person name="Hilbert H."/>
            <person name="Braun M."/>
            <person name="Holzer E."/>
            <person name="Brandt A."/>
            <person name="Peters S."/>
            <person name="van Staveren M."/>
            <person name="Dirkse W."/>
            <person name="Mooijman P."/>
            <person name="Klein Lankhorst R."/>
            <person name="Rose M."/>
            <person name="Hauf J."/>
            <person name="Koetter P."/>
            <person name="Berneiser S."/>
            <person name="Hempel S."/>
            <person name="Feldpausch M."/>
            <person name="Lamberth S."/>
            <person name="Van den Daele H."/>
            <person name="De Keyser A."/>
            <person name="Buysshaert C."/>
            <person name="Gielen J."/>
            <person name="Villarroel R."/>
            <person name="De Clercq R."/>
            <person name="van Montagu M."/>
            <person name="Rogers J."/>
            <person name="Cronin A."/>
            <person name="Quail M.A."/>
            <person name="Bray-Allen S."/>
            <person name="Clark L."/>
            <person name="Doggett J."/>
            <person name="Hall S."/>
            <person name="Kay M."/>
            <person name="Lennard N."/>
            <person name="McLay K."/>
            <person name="Mayes R."/>
            <person name="Pettett A."/>
            <person name="Rajandream M.A."/>
            <person name="Lyne M."/>
            <person name="Benes V."/>
            <person name="Rechmann S."/>
            <person name="Borkova D."/>
            <person name="Bloecker H."/>
            <person name="Scharfe M."/>
            <person name="Grimm M."/>
            <person name="Loehnert T.-H."/>
            <person name="Dose S."/>
            <person name="de Haan M."/>
            <person name="Maarse A.C."/>
            <person name="Schaefer M."/>
            <person name="Mueller-Auer S."/>
            <person name="Gabel C."/>
            <person name="Fuchs M."/>
            <person name="Fartmann B."/>
            <person name="Granderath K."/>
            <person name="Dauner D."/>
            <person name="Herzl A."/>
            <person name="Neumann S."/>
            <person name="Argiriou A."/>
            <person name="Vitale D."/>
            <person name="Liguori R."/>
            <person name="Piravandi E."/>
            <person name="Massenet O."/>
            <person name="Quigley F."/>
            <person name="Clabauld G."/>
            <person name="Muendlein A."/>
            <person name="Felber R."/>
            <person name="Schnabl S."/>
            <person name="Hiller R."/>
            <person name="Schmidt W."/>
            <person name="Lecharny A."/>
            <person name="Aubourg S."/>
            <person name="Chefdor F."/>
            <person name="Cooke R."/>
            <person name="Berger C."/>
            <person name="Monfort A."/>
            <person name="Casacuberta E."/>
            <person name="Gibbons T."/>
            <person name="Weber N."/>
            <person name="Vandenbol M."/>
            <person name="Bargues M."/>
            <person name="Terol J."/>
            <person name="Torres A."/>
            <person name="Perez-Perez A."/>
            <person name="Purnelle B."/>
            <person name="Bent E."/>
            <person name="Johnson S."/>
            <person name="Tacon D."/>
            <person name="Jesse T."/>
            <person name="Heijnen L."/>
            <person name="Schwarz S."/>
            <person name="Scholler P."/>
            <person name="Heber S."/>
            <person name="Francs P."/>
            <person name="Bielke C."/>
            <person name="Frishman D."/>
            <person name="Haase D."/>
            <person name="Lemcke K."/>
            <person name="Mewes H.-W."/>
            <person name="Stocker S."/>
            <person name="Zaccaria P."/>
            <person name="Bevan M."/>
            <person name="Wilson R.K."/>
            <person name="de la Bastide M."/>
            <person name="Habermann K."/>
            <person name="Parnell L."/>
            <person name="Dedhia N."/>
            <person name="Gnoj L."/>
            <person name="Schutz K."/>
            <person name="Huang E."/>
            <person name="Spiegel L."/>
            <person name="Sekhon M."/>
            <person name="Murray J."/>
            <person name="Sheet P."/>
            <person name="Cordes M."/>
            <person name="Abu-Threideh J."/>
            <person name="Stoneking T."/>
            <person name="Kalicki J."/>
            <person name="Graves T."/>
            <person name="Harmon G."/>
            <person name="Edwards J."/>
            <person name="Latreille P."/>
            <person name="Courtney L."/>
            <person name="Cloud J."/>
            <person name="Abbott A."/>
            <person name="Scott K."/>
            <person name="Johnson D."/>
            <person name="Minx P."/>
            <person name="Bentley D."/>
            <person name="Fulton B."/>
            <person name="Miller N."/>
            <person name="Greco T."/>
            <person name="Kemp K."/>
            <person name="Kramer J."/>
            <person name="Fulton L."/>
            <person name="Mardis E."/>
            <person name="Dante M."/>
            <person name="Pepin K."/>
            <person name="Hillier L.W."/>
            <person name="Nelson J."/>
            <person name="Spieth J."/>
            <person name="Ryan E."/>
            <person name="Andrews S."/>
            <person name="Geisel C."/>
            <person name="Layman D."/>
            <person name="Du H."/>
            <person name="Ali J."/>
            <person name="Berghoff A."/>
            <person name="Jones K."/>
            <person name="Drone K."/>
            <person name="Cotton M."/>
            <person name="Joshu C."/>
            <person name="Antonoiu B."/>
            <person name="Zidanic M."/>
            <person name="Strong C."/>
            <person name="Sun H."/>
            <person name="Lamar B."/>
            <person name="Yordan C."/>
            <person name="Ma P."/>
            <person name="Zhong J."/>
            <person name="Preston R."/>
            <person name="Vil D."/>
            <person name="Shekher M."/>
            <person name="Matero A."/>
            <person name="Shah R."/>
            <person name="Swaby I.K."/>
            <person name="O'Shaughnessy A."/>
            <person name="Rodriguez M."/>
            <person name="Hoffman J."/>
            <person name="Till S."/>
            <person name="Granat S."/>
            <person name="Shohdy N."/>
            <person name="Hasegawa A."/>
            <person name="Hameed A."/>
            <person name="Lodhi M."/>
            <person name="Johnson A."/>
            <person name="Chen E."/>
            <person name="Marra M.A."/>
            <person name="Martienssen R."/>
            <person name="McCombie W.R."/>
        </authorList>
    </citation>
    <scope>NUCLEOTIDE SEQUENCE [LARGE SCALE GENOMIC DNA]</scope>
    <source>
        <strain>cv. Columbia</strain>
    </source>
</reference>
<reference key="2">
    <citation type="journal article" date="2017" name="Plant J.">
        <title>Araport11: a complete reannotation of the Arabidopsis thaliana reference genome.</title>
        <authorList>
            <person name="Cheng C.Y."/>
            <person name="Krishnakumar V."/>
            <person name="Chan A.P."/>
            <person name="Thibaud-Nissen F."/>
            <person name="Schobel S."/>
            <person name="Town C.D."/>
        </authorList>
    </citation>
    <scope>GENOME REANNOTATION</scope>
    <source>
        <strain>cv. Columbia</strain>
    </source>
</reference>
<reference key="3">
    <citation type="journal article" date="2000" name="Plant Mol. Biol.">
        <title>In Arabidopsis thaliana, 1% of the genome codes for a novel protein family unique to plants.</title>
        <authorList>
            <person name="Aubourg S."/>
            <person name="Boudet N."/>
            <person name="Kreis M."/>
            <person name="Lecharny A."/>
        </authorList>
    </citation>
    <scope>GENE FAMILY</scope>
</reference>
<reference key="4">
    <citation type="journal article" date="2004" name="Plant Cell">
        <title>Genome-wide analysis of Arabidopsis pentatricopeptide repeat proteins reveals their essential role in organelle biogenesis.</title>
        <authorList>
            <person name="Lurin C."/>
            <person name="Andres C."/>
            <person name="Aubourg S."/>
            <person name="Bellaoui M."/>
            <person name="Bitton F."/>
            <person name="Bruyere C."/>
            <person name="Caboche M."/>
            <person name="Debast C."/>
            <person name="Gualberto J."/>
            <person name="Hoffmann B."/>
            <person name="Lecharny A."/>
            <person name="Le Ret M."/>
            <person name="Martin-Magniette M.-L."/>
            <person name="Mireau H."/>
            <person name="Peeters N."/>
            <person name="Renou J.-P."/>
            <person name="Szurek B."/>
            <person name="Taconnat L."/>
            <person name="Small I."/>
        </authorList>
    </citation>
    <scope>GENE FAMILY</scope>
</reference>
<sequence>MYRFLGLTIHGGLIKRGLDNSDTRVVSASMGFYGRCVSLGFANKLFDEMPKRDDLAWNEIVMVNLRSGNWEKAVELFREMQFSGAKAYDSTMVKLLQVCSNKEGFAEGRQIHGYVLRLGLESNVSMCNSLIVMYSRNGKLELSRKVFNSMKDRNLSSWNSILSSYTKLGYVDDAIGLLDEMEICGLKPDIVTWNSLLSGYASKGLSKDAIAVLKRMQIAGLKPSTSSISSLLQAVAEPGHLKLGKAIHGYILRNQLWYDVYVETTLIDMYIKTGYLPYARMVFDMMDAKNIVAWNSLVSGLSYACLLKDAEALMIRMEKEGIKPDAITWNSLASGYATLGKPEKALDVIGKMKEKGVAPNVVSWTAIFSGCSKNGNFRNALKVFIKMQEEGVGPNAATMSTLLKILGCLSLLHSGKEVHGFCLRKNLICDAYVATALVDMYGKSGDLQSAIEIFWGIKNKSLASWNCMLMGYAMFGRGEEGIAAFSVMLEAGMEPDAITFTSVLSVCKNSGLVQEGWKYFDLMRSRYGIIPTIEHCSCMVDLLGRSGYLDEAWDFIQTMSLKPDATIWGAFLSSCKIHRDLELAEIAWKRLQVLEPHNSANYMMMINLYSNLNRWEDVERIRNLMRNNRVRVQDLWSWIQIDQTVHIFYAEGKTHPDEGDIYFELYKLVSEMKKSGYVPDTSCIHQDISDSEKEKLLMGHTEKLAMTYGLIKKKGLAPIRVVKNTNICSDSHTVAKYMSVLRNREIVLQEGARVHHFRDGKCSCNDSW</sequence>
<organism>
    <name type="scientific">Arabidopsis thaliana</name>
    <name type="common">Mouse-ear cress</name>
    <dbReference type="NCBI Taxonomy" id="3702"/>
    <lineage>
        <taxon>Eukaryota</taxon>
        <taxon>Viridiplantae</taxon>
        <taxon>Streptophyta</taxon>
        <taxon>Embryophyta</taxon>
        <taxon>Tracheophyta</taxon>
        <taxon>Spermatophyta</taxon>
        <taxon>Magnoliopsida</taxon>
        <taxon>eudicotyledons</taxon>
        <taxon>Gunneridae</taxon>
        <taxon>Pentapetalae</taxon>
        <taxon>rosids</taxon>
        <taxon>malvids</taxon>
        <taxon>Brassicales</taxon>
        <taxon>Brassicaceae</taxon>
        <taxon>Camelineae</taxon>
        <taxon>Arabidopsis</taxon>
    </lineage>
</organism>
<protein>
    <recommendedName>
        <fullName>Pentatricopeptide repeat-containing protein At4g01030, mitochondrial</fullName>
    </recommendedName>
</protein>
<keyword id="KW-0496">Mitochondrion</keyword>
<keyword id="KW-1185">Reference proteome</keyword>
<keyword id="KW-0677">Repeat</keyword>
<keyword id="KW-0809">Transit peptide</keyword>
<proteinExistence type="inferred from homology"/>
<gene>
    <name type="primary">PCMP-H65</name>
    <name type="ordered locus">At4g01030</name>
    <name type="ORF">F3I3.50</name>
</gene>
<dbReference type="EMBL" id="AL080237">
    <property type="protein sequence ID" value="CAB45786.1"/>
    <property type="status" value="ALT_INIT"/>
    <property type="molecule type" value="Genomic_DNA"/>
</dbReference>
<dbReference type="EMBL" id="AL161491">
    <property type="protein sequence ID" value="CAB80912.1"/>
    <property type="status" value="ALT_SEQ"/>
    <property type="molecule type" value="Genomic_DNA"/>
</dbReference>
<dbReference type="EMBL" id="CP002687">
    <property type="protein sequence ID" value="AEE81970.1"/>
    <property type="molecule type" value="Genomic_DNA"/>
</dbReference>
<dbReference type="PIR" id="T10543">
    <property type="entry name" value="T10543"/>
</dbReference>
<dbReference type="RefSeq" id="NP_192012.2">
    <property type="nucleotide sequence ID" value="NM_116333.3"/>
</dbReference>
<dbReference type="SMR" id="Q9SV26"/>
<dbReference type="FunCoup" id="Q9SV26">
    <property type="interactions" value="480"/>
</dbReference>
<dbReference type="STRING" id="3702.Q9SV26"/>
<dbReference type="PaxDb" id="3702-AT4G01030.1"/>
<dbReference type="ProteomicsDB" id="249204"/>
<dbReference type="EnsemblPlants" id="AT4G01030.1">
    <property type="protein sequence ID" value="AT4G01030.1"/>
    <property type="gene ID" value="AT4G01030"/>
</dbReference>
<dbReference type="GeneID" id="827926"/>
<dbReference type="Gramene" id="AT4G01030.1">
    <property type="protein sequence ID" value="AT4G01030.1"/>
    <property type="gene ID" value="AT4G01030"/>
</dbReference>
<dbReference type="KEGG" id="ath:AT4G01030"/>
<dbReference type="Araport" id="AT4G01030"/>
<dbReference type="TAIR" id="AT4G01030"/>
<dbReference type="eggNOG" id="KOG4197">
    <property type="taxonomic scope" value="Eukaryota"/>
</dbReference>
<dbReference type="HOGENOM" id="CLU_002706_37_2_1"/>
<dbReference type="InParanoid" id="Q9SV26"/>
<dbReference type="OMA" id="WIQIEQG"/>
<dbReference type="PhylomeDB" id="Q9SV26"/>
<dbReference type="PRO" id="PR:Q9SV26"/>
<dbReference type="Proteomes" id="UP000006548">
    <property type="component" value="Chromosome 4"/>
</dbReference>
<dbReference type="ExpressionAtlas" id="Q9SV26">
    <property type="expression patterns" value="baseline and differential"/>
</dbReference>
<dbReference type="GO" id="GO:0005739">
    <property type="term" value="C:mitochondrion"/>
    <property type="evidence" value="ECO:0007669"/>
    <property type="project" value="UniProtKB-SubCell"/>
</dbReference>
<dbReference type="GO" id="GO:0003723">
    <property type="term" value="F:RNA binding"/>
    <property type="evidence" value="ECO:0007669"/>
    <property type="project" value="InterPro"/>
</dbReference>
<dbReference type="GO" id="GO:0008270">
    <property type="term" value="F:zinc ion binding"/>
    <property type="evidence" value="ECO:0007669"/>
    <property type="project" value="InterPro"/>
</dbReference>
<dbReference type="GO" id="GO:0009451">
    <property type="term" value="P:RNA modification"/>
    <property type="evidence" value="ECO:0007669"/>
    <property type="project" value="InterPro"/>
</dbReference>
<dbReference type="FunFam" id="1.25.40.10:FF:000782">
    <property type="entry name" value="Pentatricopeptide repeat-containing protein"/>
    <property type="match status" value="1"/>
</dbReference>
<dbReference type="FunFam" id="1.25.40.10:FF:001507">
    <property type="entry name" value="Pentatricopeptide repeat-containing protein At4g01030, mitochondrial"/>
    <property type="match status" value="1"/>
</dbReference>
<dbReference type="FunFam" id="1.25.40.10:FF:000090">
    <property type="entry name" value="Pentatricopeptide repeat-containing protein, chloroplastic"/>
    <property type="match status" value="1"/>
</dbReference>
<dbReference type="Gene3D" id="1.25.40.10">
    <property type="entry name" value="Tetratricopeptide repeat domain"/>
    <property type="match status" value="6"/>
</dbReference>
<dbReference type="InterPro" id="IPR032867">
    <property type="entry name" value="DYW_dom"/>
</dbReference>
<dbReference type="InterPro" id="IPR046848">
    <property type="entry name" value="E_motif"/>
</dbReference>
<dbReference type="InterPro" id="IPR002885">
    <property type="entry name" value="Pentatricopeptide_rpt"/>
</dbReference>
<dbReference type="InterPro" id="IPR046960">
    <property type="entry name" value="PPR_At4g14850-like_plant"/>
</dbReference>
<dbReference type="InterPro" id="IPR011990">
    <property type="entry name" value="TPR-like_helical_dom_sf"/>
</dbReference>
<dbReference type="NCBIfam" id="TIGR00756">
    <property type="entry name" value="PPR"/>
    <property type="match status" value="8"/>
</dbReference>
<dbReference type="PANTHER" id="PTHR47926:SF539">
    <property type="entry name" value="DYW DOMAIN-CONTAINING PROTEIN"/>
    <property type="match status" value="1"/>
</dbReference>
<dbReference type="PANTHER" id="PTHR47926">
    <property type="entry name" value="PENTATRICOPEPTIDE REPEAT-CONTAINING PROTEIN"/>
    <property type="match status" value="1"/>
</dbReference>
<dbReference type="Pfam" id="PF14432">
    <property type="entry name" value="DYW_deaminase"/>
    <property type="match status" value="1"/>
</dbReference>
<dbReference type="Pfam" id="PF20431">
    <property type="entry name" value="E_motif"/>
    <property type="match status" value="1"/>
</dbReference>
<dbReference type="Pfam" id="PF01535">
    <property type="entry name" value="PPR"/>
    <property type="match status" value="3"/>
</dbReference>
<dbReference type="Pfam" id="PF13041">
    <property type="entry name" value="PPR_2"/>
    <property type="match status" value="3"/>
</dbReference>
<dbReference type="Pfam" id="PF13812">
    <property type="entry name" value="PPR_3"/>
    <property type="match status" value="2"/>
</dbReference>
<dbReference type="PROSITE" id="PS51375">
    <property type="entry name" value="PPR"/>
    <property type="match status" value="15"/>
</dbReference>
<evidence type="ECO:0000255" key="1"/>
<evidence type="ECO:0000305" key="2"/>
<comment type="subcellular location">
    <subcellularLocation>
        <location evidence="2">Mitochondrion</location>
    </subcellularLocation>
</comment>
<comment type="similarity">
    <text evidence="2">Belongs to the PPR family. PCMP-H subfamily.</text>
</comment>
<comment type="sequence caution" evidence="2">
    <conflict type="erroneous initiation">
        <sequence resource="EMBL-CDS" id="CAB45786"/>
    </conflict>
</comment>
<comment type="sequence caution" evidence="2">
    <conflict type="frameshift">
        <sequence resource="EMBL-CDS" id="CAB80912"/>
    </conflict>
</comment>
<comment type="online information" name="Pentatricopeptide repeat proteins">
    <link uri="https://ppr.plantenergy.uwa.edu.au"/>
</comment>